<evidence type="ECO:0000255" key="1">
    <source>
        <dbReference type="HAMAP-Rule" id="MF_01350"/>
    </source>
</evidence>
<gene>
    <name evidence="1" type="primary">ndhA</name>
    <name type="synonym">ndh1</name>
</gene>
<name>NU1C_LEPBY</name>
<sequence length="372" mass="40239">MNPGIDLQGTFIETVQSLGIPAGAAKALWMPLPMLIMLLAATVSVLVVVWLERKISAAAQQRIGPEFIGPLGVLAPLADGLKLVLKEDVVPAKADKLLFTLGPAIVVIPVFLSYLILPFGQNLQITDVGLGIFLWIALSSVVPIGLLMSGYASNNKYSLLGGLRAAAQSISYELPLALSVLAVVMMSNSLSTVDIVNQQAGYGILGWNIWRQPVGFIIFWIAALAECERIPFDLPEAEEELVAGYQTEYSGMKFALFYLGSYVNLTLSALLFAVLYLGGWEFPISLSVISGLIGVPESTPWLQLIFATIGIGMTLLKAYFLIFLAILMRWTVPRVRIDQLLDLGWKFLLPVSLVNLLITAGLKLAFPVAFGG</sequence>
<comment type="function">
    <text evidence="1">NDH-1 shuttles electrons from an unknown electron donor, via FMN and iron-sulfur (Fe-S) centers, to quinones in the respiratory and/or the photosynthetic chain. The immediate electron acceptor for the enzyme in this species is believed to be plastoquinone. Couples the redox reaction to proton translocation, and thus conserves the redox energy in a proton gradient.</text>
</comment>
<comment type="catalytic activity">
    <reaction evidence="1">
        <text>a plastoquinone + NADH + (n+1) H(+)(in) = a plastoquinol + NAD(+) + n H(+)(out)</text>
        <dbReference type="Rhea" id="RHEA:42608"/>
        <dbReference type="Rhea" id="RHEA-COMP:9561"/>
        <dbReference type="Rhea" id="RHEA-COMP:9562"/>
        <dbReference type="ChEBI" id="CHEBI:15378"/>
        <dbReference type="ChEBI" id="CHEBI:17757"/>
        <dbReference type="ChEBI" id="CHEBI:57540"/>
        <dbReference type="ChEBI" id="CHEBI:57945"/>
        <dbReference type="ChEBI" id="CHEBI:62192"/>
    </reaction>
</comment>
<comment type="catalytic activity">
    <reaction evidence="1">
        <text>a plastoquinone + NADPH + (n+1) H(+)(in) = a plastoquinol + NADP(+) + n H(+)(out)</text>
        <dbReference type="Rhea" id="RHEA:42612"/>
        <dbReference type="Rhea" id="RHEA-COMP:9561"/>
        <dbReference type="Rhea" id="RHEA-COMP:9562"/>
        <dbReference type="ChEBI" id="CHEBI:15378"/>
        <dbReference type="ChEBI" id="CHEBI:17757"/>
        <dbReference type="ChEBI" id="CHEBI:57783"/>
        <dbReference type="ChEBI" id="CHEBI:58349"/>
        <dbReference type="ChEBI" id="CHEBI:62192"/>
    </reaction>
</comment>
<comment type="subunit">
    <text evidence="1">NDH-1 is composed of at least 11 different subunits.</text>
</comment>
<comment type="subcellular location">
    <subcellularLocation>
        <location evidence="1">Cellular thylakoid membrane</location>
        <topology evidence="1">Multi-pass membrane protein</topology>
    </subcellularLocation>
</comment>
<comment type="similarity">
    <text evidence="1">Belongs to the complex I subunit 1 family.</text>
</comment>
<keyword id="KW-0472">Membrane</keyword>
<keyword id="KW-0520">NAD</keyword>
<keyword id="KW-0521">NADP</keyword>
<keyword id="KW-0618">Plastoquinone</keyword>
<keyword id="KW-0874">Quinone</keyword>
<keyword id="KW-0793">Thylakoid</keyword>
<keyword id="KW-1278">Translocase</keyword>
<keyword id="KW-0812">Transmembrane</keyword>
<keyword id="KW-1133">Transmembrane helix</keyword>
<feature type="chain" id="PRO_0000117519" description="NAD(P)H-quinone oxidoreductase subunit 1">
    <location>
        <begin position="1"/>
        <end position="372"/>
    </location>
</feature>
<feature type="transmembrane region" description="Helical" evidence="1">
    <location>
        <begin position="31"/>
        <end position="51"/>
    </location>
</feature>
<feature type="transmembrane region" description="Helical" evidence="1">
    <location>
        <begin position="65"/>
        <end position="85"/>
    </location>
</feature>
<feature type="transmembrane region" description="Helical" evidence="1">
    <location>
        <begin position="97"/>
        <end position="117"/>
    </location>
</feature>
<feature type="transmembrane region" description="Helical" evidence="1">
    <location>
        <begin position="128"/>
        <end position="148"/>
    </location>
</feature>
<feature type="transmembrane region" description="Helical" evidence="1">
    <location>
        <begin position="176"/>
        <end position="196"/>
    </location>
</feature>
<feature type="transmembrane region" description="Helical" evidence="1">
    <location>
        <begin position="254"/>
        <end position="276"/>
    </location>
</feature>
<feature type="transmembrane region" description="Helical" evidence="1">
    <location>
        <begin position="304"/>
        <end position="324"/>
    </location>
</feature>
<feature type="transmembrane region" description="Helical" evidence="1">
    <location>
        <begin position="347"/>
        <end position="367"/>
    </location>
</feature>
<reference key="1">
    <citation type="journal article" date="1991" name="Plant Cell Physiol.">
        <title>Structure of a co-transcribed gene cluster, ndh1-frxB-ndh6-ndh4L, cloned from the filamentous cyanobacterium Plectonema boryanum.</title>
        <authorList>
            <person name="Takahashi Y."/>
            <person name="Shonai F."/>
            <person name="Fujita Y."/>
            <person name="Kohchi T."/>
            <person name="Ohyama K."/>
            <person name="Matsubara H."/>
        </authorList>
    </citation>
    <scope>NUCLEOTIDE SEQUENCE [GENOMIC DNA]</scope>
    <source>
        <strain>ATCC 27894 / CCAP 1463/1 / IAM M-101 / PCC 6306 / UTEX 581</strain>
    </source>
</reference>
<protein>
    <recommendedName>
        <fullName evidence="1">NAD(P)H-quinone oxidoreductase subunit 1</fullName>
        <ecNumber evidence="1">7.1.1.-</ecNumber>
    </recommendedName>
    <alternativeName>
        <fullName evidence="1">NAD(P)H dehydrogenase I subunit 1</fullName>
    </alternativeName>
    <alternativeName>
        <fullName evidence="1">NDH-1 subunit 1</fullName>
    </alternativeName>
    <alternativeName>
        <fullName evidence="1">NDH-A</fullName>
    </alternativeName>
</protein>
<proteinExistence type="inferred from homology"/>
<accession>Q00242</accession>
<organism>
    <name type="scientific">Leptolyngbya boryana</name>
    <name type="common">Plectonema boryanum</name>
    <dbReference type="NCBI Taxonomy" id="1184"/>
    <lineage>
        <taxon>Bacteria</taxon>
        <taxon>Bacillati</taxon>
        <taxon>Cyanobacteriota</taxon>
        <taxon>Cyanophyceae</taxon>
        <taxon>Leptolyngbyales</taxon>
        <taxon>Leptolyngbyaceae</taxon>
        <taxon>Leptolyngbya group</taxon>
        <taxon>Leptolyngbya</taxon>
    </lineage>
</organism>
<dbReference type="EC" id="7.1.1.-" evidence="1"/>
<dbReference type="EMBL" id="D01014">
    <property type="protein sequence ID" value="BAA00814.1"/>
    <property type="molecule type" value="Genomic_DNA"/>
</dbReference>
<dbReference type="PIR" id="JQ2135">
    <property type="entry name" value="JQ2135"/>
</dbReference>
<dbReference type="SMR" id="Q00242"/>
<dbReference type="GO" id="GO:0031676">
    <property type="term" value="C:plasma membrane-derived thylakoid membrane"/>
    <property type="evidence" value="ECO:0007669"/>
    <property type="project" value="UniProtKB-SubCell"/>
</dbReference>
<dbReference type="GO" id="GO:0003954">
    <property type="term" value="F:NADH dehydrogenase activity"/>
    <property type="evidence" value="ECO:0007669"/>
    <property type="project" value="TreeGrafter"/>
</dbReference>
<dbReference type="GO" id="GO:0016655">
    <property type="term" value="F:oxidoreductase activity, acting on NAD(P)H, quinone or similar compound as acceptor"/>
    <property type="evidence" value="ECO:0007669"/>
    <property type="project" value="UniProtKB-UniRule"/>
</dbReference>
<dbReference type="GO" id="GO:0048038">
    <property type="term" value="F:quinone binding"/>
    <property type="evidence" value="ECO:0007669"/>
    <property type="project" value="UniProtKB-KW"/>
</dbReference>
<dbReference type="GO" id="GO:0009060">
    <property type="term" value="P:aerobic respiration"/>
    <property type="evidence" value="ECO:0007669"/>
    <property type="project" value="TreeGrafter"/>
</dbReference>
<dbReference type="GO" id="GO:0019684">
    <property type="term" value="P:photosynthesis, light reaction"/>
    <property type="evidence" value="ECO:0007669"/>
    <property type="project" value="UniProtKB-UniRule"/>
</dbReference>
<dbReference type="HAMAP" id="MF_01350">
    <property type="entry name" value="NDH1_NuoH"/>
    <property type="match status" value="1"/>
</dbReference>
<dbReference type="InterPro" id="IPR001694">
    <property type="entry name" value="NADH_UbQ_OxRdtase_su1/FPO"/>
</dbReference>
<dbReference type="InterPro" id="IPR018086">
    <property type="entry name" value="NADH_UbQ_OxRdtase_su1_CS"/>
</dbReference>
<dbReference type="NCBIfam" id="NF004741">
    <property type="entry name" value="PRK06076.1-2"/>
    <property type="match status" value="1"/>
</dbReference>
<dbReference type="NCBIfam" id="NF004744">
    <property type="entry name" value="PRK06076.1-5"/>
    <property type="match status" value="1"/>
</dbReference>
<dbReference type="PANTHER" id="PTHR11432">
    <property type="entry name" value="NADH DEHYDROGENASE SUBUNIT 1"/>
    <property type="match status" value="1"/>
</dbReference>
<dbReference type="PANTHER" id="PTHR11432:SF3">
    <property type="entry name" value="NADH-UBIQUINONE OXIDOREDUCTASE CHAIN 1"/>
    <property type="match status" value="1"/>
</dbReference>
<dbReference type="Pfam" id="PF00146">
    <property type="entry name" value="NADHdh"/>
    <property type="match status" value="1"/>
</dbReference>
<dbReference type="PROSITE" id="PS00667">
    <property type="entry name" value="COMPLEX1_ND1_1"/>
    <property type="match status" value="1"/>
</dbReference>
<dbReference type="PROSITE" id="PS00668">
    <property type="entry name" value="COMPLEX1_ND1_2"/>
    <property type="match status" value="1"/>
</dbReference>